<gene>
    <name evidence="1" type="primary">mutH</name>
    <name type="ordered locus">SCH_2944</name>
</gene>
<protein>
    <recommendedName>
        <fullName evidence="1">DNA mismatch repair protein MutH</fullName>
    </recommendedName>
    <alternativeName>
        <fullName evidence="1">Methyl-directed mismatch repair protein</fullName>
    </alternativeName>
</protein>
<organism>
    <name type="scientific">Salmonella choleraesuis (strain SC-B67)</name>
    <dbReference type="NCBI Taxonomy" id="321314"/>
    <lineage>
        <taxon>Bacteria</taxon>
        <taxon>Pseudomonadati</taxon>
        <taxon>Pseudomonadota</taxon>
        <taxon>Gammaproteobacteria</taxon>
        <taxon>Enterobacterales</taxon>
        <taxon>Enterobacteriaceae</taxon>
        <taxon>Salmonella</taxon>
    </lineage>
</organism>
<comment type="function">
    <text evidence="1">Sequence-specific endonuclease that cleaves unmethylated GATC sequences. It is involved in DNA mismatch repair.</text>
</comment>
<comment type="subcellular location">
    <subcellularLocation>
        <location evidence="1">Cytoplasm</location>
    </subcellularLocation>
</comment>
<comment type="similarity">
    <text evidence="1">Belongs to the MutH family.</text>
</comment>
<sequence>MSALCPLLTPPASEALLLAQARQLSGYTLGELAAMAGITTPKDLKRDKGWIGVLLEIWLGASAGSKPEQDFAALGVELKTIPVDSLGRPLETTFVCVAPLTGNSGVTWETSHVRHKLKRVLWVPVEGDRSIPLAERRVGSPLLWSPSEEEDRQLRLDWEELMDMIVLGQVERITARHGEVLQLRPKAANSRALTEAIGARGEPILTLPRGFYLKKNFTQALLARHFLLQNP</sequence>
<keyword id="KW-0963">Cytoplasm</keyword>
<keyword id="KW-0227">DNA damage</keyword>
<keyword id="KW-0234">DNA repair</keyword>
<keyword id="KW-0255">Endonuclease</keyword>
<keyword id="KW-0378">Hydrolase</keyword>
<keyword id="KW-0540">Nuclease</keyword>
<name>MUTH_SALCH</name>
<accession>Q57KB2</accession>
<dbReference type="EMBL" id="AE017220">
    <property type="protein sequence ID" value="AAX66850.1"/>
    <property type="molecule type" value="Genomic_DNA"/>
</dbReference>
<dbReference type="RefSeq" id="WP_001274931.1">
    <property type="nucleotide sequence ID" value="NC_006905.1"/>
</dbReference>
<dbReference type="SMR" id="Q57KB2"/>
<dbReference type="KEGG" id="sec:SCH_2944"/>
<dbReference type="HOGENOM" id="CLU_086669_0_0_6"/>
<dbReference type="Proteomes" id="UP000000538">
    <property type="component" value="Chromosome"/>
</dbReference>
<dbReference type="GO" id="GO:0005737">
    <property type="term" value="C:cytoplasm"/>
    <property type="evidence" value="ECO:0007669"/>
    <property type="project" value="UniProtKB-SubCell"/>
</dbReference>
<dbReference type="GO" id="GO:0003677">
    <property type="term" value="F:DNA binding"/>
    <property type="evidence" value="ECO:0007669"/>
    <property type="project" value="InterPro"/>
</dbReference>
<dbReference type="GO" id="GO:0004519">
    <property type="term" value="F:endonuclease activity"/>
    <property type="evidence" value="ECO:0007669"/>
    <property type="project" value="UniProtKB-UniRule"/>
</dbReference>
<dbReference type="GO" id="GO:0006304">
    <property type="term" value="P:DNA modification"/>
    <property type="evidence" value="ECO:0007669"/>
    <property type="project" value="InterPro"/>
</dbReference>
<dbReference type="GO" id="GO:0006298">
    <property type="term" value="P:mismatch repair"/>
    <property type="evidence" value="ECO:0007669"/>
    <property type="project" value="UniProtKB-UniRule"/>
</dbReference>
<dbReference type="CDD" id="cd00583">
    <property type="entry name" value="MutH-like"/>
    <property type="match status" value="1"/>
</dbReference>
<dbReference type="FunFam" id="3.40.600.10:FF:000001">
    <property type="entry name" value="DNA mismatch repair protein MutH"/>
    <property type="match status" value="1"/>
</dbReference>
<dbReference type="Gene3D" id="3.40.600.10">
    <property type="entry name" value="DNA mismatch repair MutH/Restriction endonuclease, type II"/>
    <property type="match status" value="1"/>
</dbReference>
<dbReference type="HAMAP" id="MF_00759">
    <property type="entry name" value="MutH"/>
    <property type="match status" value="1"/>
</dbReference>
<dbReference type="InterPro" id="IPR004230">
    <property type="entry name" value="DNA_mismatch_repair_MutH"/>
</dbReference>
<dbReference type="InterPro" id="IPR011337">
    <property type="entry name" value="DNA_rep_MutH/RE_typeII_Sau3AI"/>
</dbReference>
<dbReference type="InterPro" id="IPR037057">
    <property type="entry name" value="DNA_rep_MutH/T2_RE_sf"/>
</dbReference>
<dbReference type="InterPro" id="IPR011335">
    <property type="entry name" value="Restrct_endonuc-II-like"/>
</dbReference>
<dbReference type="NCBIfam" id="TIGR02248">
    <property type="entry name" value="mutH_TIGR"/>
    <property type="match status" value="1"/>
</dbReference>
<dbReference type="NCBIfam" id="NF003458">
    <property type="entry name" value="PRK05070.1"/>
    <property type="match status" value="1"/>
</dbReference>
<dbReference type="Pfam" id="PF02976">
    <property type="entry name" value="MutH"/>
    <property type="match status" value="1"/>
</dbReference>
<dbReference type="SMART" id="SM00927">
    <property type="entry name" value="MutH"/>
    <property type="match status" value="1"/>
</dbReference>
<dbReference type="SUPFAM" id="SSF52980">
    <property type="entry name" value="Restriction endonuclease-like"/>
    <property type="match status" value="1"/>
</dbReference>
<reference key="1">
    <citation type="journal article" date="2005" name="Nucleic Acids Res.">
        <title>The genome sequence of Salmonella enterica serovar Choleraesuis, a highly invasive and resistant zoonotic pathogen.</title>
        <authorList>
            <person name="Chiu C.-H."/>
            <person name="Tang P."/>
            <person name="Chu C."/>
            <person name="Hu S."/>
            <person name="Bao Q."/>
            <person name="Yu J."/>
            <person name="Chou Y.-Y."/>
            <person name="Wang H.-S."/>
            <person name="Lee Y.-S."/>
        </authorList>
    </citation>
    <scope>NUCLEOTIDE SEQUENCE [LARGE SCALE GENOMIC DNA]</scope>
    <source>
        <strain>SC-B67</strain>
    </source>
</reference>
<evidence type="ECO:0000255" key="1">
    <source>
        <dbReference type="HAMAP-Rule" id="MF_00759"/>
    </source>
</evidence>
<proteinExistence type="inferred from homology"/>
<feature type="chain" id="PRO_1000046703" description="DNA mismatch repair protein MutH">
    <location>
        <begin position="1"/>
        <end position="231"/>
    </location>
</feature>